<name>GATC_SOLM1</name>
<sequence length="94" mass="10122">MPISSEDAAKVAKLARLRLDDDKLERFAGQMDGILAYMETLGSVDTAGVEPLYSPVTHETPMRADVAAKACSRDQILANAPATDGQFFIVPKIV</sequence>
<organism>
    <name type="scientific">Solidesulfovibrio magneticus (strain ATCC 700980 / DSM 13731 / RS-1)</name>
    <name type="common">Desulfovibrio magneticus</name>
    <dbReference type="NCBI Taxonomy" id="573370"/>
    <lineage>
        <taxon>Bacteria</taxon>
        <taxon>Pseudomonadati</taxon>
        <taxon>Thermodesulfobacteriota</taxon>
        <taxon>Desulfovibrionia</taxon>
        <taxon>Desulfovibrionales</taxon>
        <taxon>Desulfovibrionaceae</taxon>
        <taxon>Solidesulfovibrio</taxon>
    </lineage>
</organism>
<dbReference type="EC" id="6.3.5.-" evidence="1"/>
<dbReference type="EMBL" id="AP010904">
    <property type="protein sequence ID" value="BAH75226.1"/>
    <property type="molecule type" value="Genomic_DNA"/>
</dbReference>
<dbReference type="RefSeq" id="WP_015860425.1">
    <property type="nucleotide sequence ID" value="NC_012796.1"/>
</dbReference>
<dbReference type="SMR" id="C4XQ61"/>
<dbReference type="STRING" id="573370.DMR_17350"/>
<dbReference type="KEGG" id="dma:DMR_17350"/>
<dbReference type="eggNOG" id="COG0721">
    <property type="taxonomic scope" value="Bacteria"/>
</dbReference>
<dbReference type="HOGENOM" id="CLU_105899_2_0_7"/>
<dbReference type="OrthoDB" id="9813938at2"/>
<dbReference type="Proteomes" id="UP000009071">
    <property type="component" value="Chromosome"/>
</dbReference>
<dbReference type="GO" id="GO:0050566">
    <property type="term" value="F:asparaginyl-tRNA synthase (glutamine-hydrolyzing) activity"/>
    <property type="evidence" value="ECO:0007669"/>
    <property type="project" value="RHEA"/>
</dbReference>
<dbReference type="GO" id="GO:0005524">
    <property type="term" value="F:ATP binding"/>
    <property type="evidence" value="ECO:0007669"/>
    <property type="project" value="UniProtKB-KW"/>
</dbReference>
<dbReference type="GO" id="GO:0050567">
    <property type="term" value="F:glutaminyl-tRNA synthase (glutamine-hydrolyzing) activity"/>
    <property type="evidence" value="ECO:0007669"/>
    <property type="project" value="UniProtKB-UniRule"/>
</dbReference>
<dbReference type="GO" id="GO:0070681">
    <property type="term" value="P:glutaminyl-tRNAGln biosynthesis via transamidation"/>
    <property type="evidence" value="ECO:0007669"/>
    <property type="project" value="TreeGrafter"/>
</dbReference>
<dbReference type="GO" id="GO:0006450">
    <property type="term" value="P:regulation of translational fidelity"/>
    <property type="evidence" value="ECO:0007669"/>
    <property type="project" value="InterPro"/>
</dbReference>
<dbReference type="GO" id="GO:0006412">
    <property type="term" value="P:translation"/>
    <property type="evidence" value="ECO:0007669"/>
    <property type="project" value="UniProtKB-UniRule"/>
</dbReference>
<dbReference type="Gene3D" id="1.10.20.60">
    <property type="entry name" value="Glu-tRNAGln amidotransferase C subunit, N-terminal domain"/>
    <property type="match status" value="1"/>
</dbReference>
<dbReference type="HAMAP" id="MF_00122">
    <property type="entry name" value="GatC"/>
    <property type="match status" value="1"/>
</dbReference>
<dbReference type="InterPro" id="IPR036113">
    <property type="entry name" value="Asp/Glu-ADT_sf_sub_c"/>
</dbReference>
<dbReference type="InterPro" id="IPR003837">
    <property type="entry name" value="GatC"/>
</dbReference>
<dbReference type="NCBIfam" id="TIGR00135">
    <property type="entry name" value="gatC"/>
    <property type="match status" value="1"/>
</dbReference>
<dbReference type="PANTHER" id="PTHR15004">
    <property type="entry name" value="GLUTAMYL-TRNA(GLN) AMIDOTRANSFERASE SUBUNIT C, MITOCHONDRIAL"/>
    <property type="match status" value="1"/>
</dbReference>
<dbReference type="PANTHER" id="PTHR15004:SF0">
    <property type="entry name" value="GLUTAMYL-TRNA(GLN) AMIDOTRANSFERASE SUBUNIT C, MITOCHONDRIAL"/>
    <property type="match status" value="1"/>
</dbReference>
<dbReference type="Pfam" id="PF02686">
    <property type="entry name" value="GatC"/>
    <property type="match status" value="1"/>
</dbReference>
<dbReference type="SUPFAM" id="SSF141000">
    <property type="entry name" value="Glu-tRNAGln amidotransferase C subunit"/>
    <property type="match status" value="1"/>
</dbReference>
<accession>C4XQ61</accession>
<keyword id="KW-0067">ATP-binding</keyword>
<keyword id="KW-0436">Ligase</keyword>
<keyword id="KW-0547">Nucleotide-binding</keyword>
<keyword id="KW-0648">Protein biosynthesis</keyword>
<evidence type="ECO:0000255" key="1">
    <source>
        <dbReference type="HAMAP-Rule" id="MF_00122"/>
    </source>
</evidence>
<proteinExistence type="inferred from homology"/>
<gene>
    <name evidence="1" type="primary">gatC</name>
    <name type="ordered locus">DMR_17350</name>
</gene>
<feature type="chain" id="PRO_1000203069" description="Aspartyl/glutamyl-tRNA(Asn/Gln) amidotransferase subunit C">
    <location>
        <begin position="1"/>
        <end position="94"/>
    </location>
</feature>
<protein>
    <recommendedName>
        <fullName evidence="1">Aspartyl/glutamyl-tRNA(Asn/Gln) amidotransferase subunit C</fullName>
        <shortName evidence="1">Asp/Glu-ADT subunit C</shortName>
        <ecNumber evidence="1">6.3.5.-</ecNumber>
    </recommendedName>
</protein>
<comment type="function">
    <text evidence="1">Allows the formation of correctly charged Asn-tRNA(Asn) or Gln-tRNA(Gln) through the transamidation of misacylated Asp-tRNA(Asn) or Glu-tRNA(Gln) in organisms which lack either or both of asparaginyl-tRNA or glutaminyl-tRNA synthetases. The reaction takes place in the presence of glutamine and ATP through an activated phospho-Asp-tRNA(Asn) or phospho-Glu-tRNA(Gln).</text>
</comment>
<comment type="catalytic activity">
    <reaction evidence="1">
        <text>L-glutamyl-tRNA(Gln) + L-glutamine + ATP + H2O = L-glutaminyl-tRNA(Gln) + L-glutamate + ADP + phosphate + H(+)</text>
        <dbReference type="Rhea" id="RHEA:17521"/>
        <dbReference type="Rhea" id="RHEA-COMP:9681"/>
        <dbReference type="Rhea" id="RHEA-COMP:9684"/>
        <dbReference type="ChEBI" id="CHEBI:15377"/>
        <dbReference type="ChEBI" id="CHEBI:15378"/>
        <dbReference type="ChEBI" id="CHEBI:29985"/>
        <dbReference type="ChEBI" id="CHEBI:30616"/>
        <dbReference type="ChEBI" id="CHEBI:43474"/>
        <dbReference type="ChEBI" id="CHEBI:58359"/>
        <dbReference type="ChEBI" id="CHEBI:78520"/>
        <dbReference type="ChEBI" id="CHEBI:78521"/>
        <dbReference type="ChEBI" id="CHEBI:456216"/>
    </reaction>
</comment>
<comment type="catalytic activity">
    <reaction evidence="1">
        <text>L-aspartyl-tRNA(Asn) + L-glutamine + ATP + H2O = L-asparaginyl-tRNA(Asn) + L-glutamate + ADP + phosphate + 2 H(+)</text>
        <dbReference type="Rhea" id="RHEA:14513"/>
        <dbReference type="Rhea" id="RHEA-COMP:9674"/>
        <dbReference type="Rhea" id="RHEA-COMP:9677"/>
        <dbReference type="ChEBI" id="CHEBI:15377"/>
        <dbReference type="ChEBI" id="CHEBI:15378"/>
        <dbReference type="ChEBI" id="CHEBI:29985"/>
        <dbReference type="ChEBI" id="CHEBI:30616"/>
        <dbReference type="ChEBI" id="CHEBI:43474"/>
        <dbReference type="ChEBI" id="CHEBI:58359"/>
        <dbReference type="ChEBI" id="CHEBI:78515"/>
        <dbReference type="ChEBI" id="CHEBI:78516"/>
        <dbReference type="ChEBI" id="CHEBI:456216"/>
    </reaction>
</comment>
<comment type="subunit">
    <text evidence="1">Heterotrimer of A, B and C subunits.</text>
</comment>
<comment type="similarity">
    <text evidence="1">Belongs to the GatC family.</text>
</comment>
<reference key="1">
    <citation type="journal article" date="2009" name="Genome Res.">
        <title>Whole genome sequence of Desulfovibrio magneticus strain RS-1 revealed common gene clusters in magnetotactic bacteria.</title>
        <authorList>
            <person name="Nakazawa H."/>
            <person name="Arakaki A."/>
            <person name="Narita-Yamada S."/>
            <person name="Yashiro I."/>
            <person name="Jinno K."/>
            <person name="Aoki N."/>
            <person name="Tsuruyama A."/>
            <person name="Okamura Y."/>
            <person name="Tanikawa S."/>
            <person name="Fujita N."/>
            <person name="Takeyama H."/>
            <person name="Matsunaga T."/>
        </authorList>
    </citation>
    <scope>NUCLEOTIDE SEQUENCE [LARGE SCALE GENOMIC DNA]</scope>
    <source>
        <strain>ATCC 700980 / DSM 13731 / RS-1</strain>
    </source>
</reference>